<reference key="1">
    <citation type="submission" date="2003-12" db="EMBL/GenBank/DDBJ databases">
        <authorList>
            <consortium name="NIH - Xenopus Gene Collection (XGC) project"/>
        </authorList>
    </citation>
    <scope>NUCLEOTIDE SEQUENCE [LARGE SCALE MRNA]</scope>
    <source>
        <tissue>Embryo</tissue>
    </source>
</reference>
<evidence type="ECO:0000250" key="1">
    <source>
        <dbReference type="UniProtKB" id="Q3UMU9"/>
    </source>
</evidence>
<evidence type="ECO:0000250" key="2">
    <source>
        <dbReference type="UniProtKB" id="Q7Z4V5"/>
    </source>
</evidence>
<evidence type="ECO:0000250" key="3">
    <source>
        <dbReference type="UniProtKB" id="Q925G1"/>
    </source>
</evidence>
<evidence type="ECO:0000255" key="4"/>
<evidence type="ECO:0000255" key="5">
    <source>
        <dbReference type="PROSITE-ProRule" id="PRU00162"/>
    </source>
</evidence>
<evidence type="ECO:0000256" key="6">
    <source>
        <dbReference type="SAM" id="MobiDB-lite"/>
    </source>
</evidence>
<evidence type="ECO:0000305" key="7"/>
<keyword id="KW-0175">Coiled coil</keyword>
<keyword id="KW-0963">Cytoplasm</keyword>
<keyword id="KW-0227">DNA damage</keyword>
<keyword id="KW-0233">DNA recombination</keyword>
<keyword id="KW-0234">DNA repair</keyword>
<keyword id="KW-0517">Myogenesis</keyword>
<keyword id="KW-0539">Nucleus</keyword>
<keyword id="KW-1185">Reference proteome</keyword>
<proteinExistence type="evidence at transcript level"/>
<gene>
    <name type="primary">hdgfl2</name>
    <name type="synonym">hdgfrp2</name>
</gene>
<comment type="function">
    <text evidence="2">May act as a regulator of myogenesis (By similarity). Promotes the repair of DNA double-strand breaks (DSBs) through the homologous recombination pathway by facilitating the recruitment of the DNA endonuclease RBBP8 to the DSBs (By similarity).</text>
</comment>
<comment type="subcellular location">
    <subcellularLocation>
        <location evidence="1">Nucleus</location>
    </subcellularLocation>
    <subcellularLocation>
        <location evidence="3">Cytoplasm</location>
    </subcellularLocation>
</comment>
<comment type="similarity">
    <text evidence="7">Belongs to the HDGF family.</text>
</comment>
<name>HDGR2_XENTR</name>
<dbReference type="EMBL" id="BC063366">
    <property type="protein sequence ID" value="AAH63366.1"/>
    <property type="molecule type" value="mRNA"/>
</dbReference>
<dbReference type="RefSeq" id="NP_989176.1">
    <property type="nucleotide sequence ID" value="NM_203845.1"/>
</dbReference>
<dbReference type="SMR" id="Q6P4K1"/>
<dbReference type="FunCoup" id="Q6P4K1">
    <property type="interactions" value="2131"/>
</dbReference>
<dbReference type="STRING" id="8364.ENSXETP00000052752"/>
<dbReference type="PaxDb" id="8364-ENSXETP00000052142"/>
<dbReference type="DNASU" id="394783"/>
<dbReference type="GeneID" id="394783"/>
<dbReference type="KEGG" id="xtr:394783"/>
<dbReference type="AGR" id="Xenbase:XB-GENE-6456056"/>
<dbReference type="CTD" id="84717"/>
<dbReference type="Xenbase" id="XB-GENE-6456056">
    <property type="gene designation" value="hdgfl2"/>
</dbReference>
<dbReference type="eggNOG" id="KOG1904">
    <property type="taxonomic scope" value="Eukaryota"/>
</dbReference>
<dbReference type="InParanoid" id="Q6P4K1"/>
<dbReference type="OrthoDB" id="62853at2759"/>
<dbReference type="TreeFam" id="TF105385"/>
<dbReference type="Proteomes" id="UP000008143">
    <property type="component" value="Chromosome 1"/>
</dbReference>
<dbReference type="GO" id="GO:0005737">
    <property type="term" value="C:cytoplasm"/>
    <property type="evidence" value="ECO:0000250"/>
    <property type="project" value="UniProtKB"/>
</dbReference>
<dbReference type="GO" id="GO:0005634">
    <property type="term" value="C:nucleus"/>
    <property type="evidence" value="ECO:0000250"/>
    <property type="project" value="UniProtKB"/>
</dbReference>
<dbReference type="GO" id="GO:0006310">
    <property type="term" value="P:DNA recombination"/>
    <property type="evidence" value="ECO:0007669"/>
    <property type="project" value="UniProtKB-KW"/>
</dbReference>
<dbReference type="GO" id="GO:0006281">
    <property type="term" value="P:DNA repair"/>
    <property type="evidence" value="ECO:0007669"/>
    <property type="project" value="UniProtKB-KW"/>
</dbReference>
<dbReference type="GO" id="GO:0007517">
    <property type="term" value="P:muscle organ development"/>
    <property type="evidence" value="ECO:0007669"/>
    <property type="project" value="UniProtKB-KW"/>
</dbReference>
<dbReference type="GO" id="GO:1905168">
    <property type="term" value="P:positive regulation of double-strand break repair via homologous recombination"/>
    <property type="evidence" value="ECO:0000250"/>
    <property type="project" value="UniProtKB"/>
</dbReference>
<dbReference type="CDD" id="cd20149">
    <property type="entry name" value="PWWP_HDGFL2"/>
    <property type="match status" value="1"/>
</dbReference>
<dbReference type="FunFam" id="2.30.30.140:FF:000017">
    <property type="entry name" value="hepatoma-derived growth factor isoform X1"/>
    <property type="match status" value="1"/>
</dbReference>
<dbReference type="Gene3D" id="2.30.30.140">
    <property type="match status" value="1"/>
</dbReference>
<dbReference type="Gene3D" id="1.20.930.10">
    <property type="entry name" value="Conserved domain common to transcription factors TFIIS, elongin A, CRSP70"/>
    <property type="match status" value="1"/>
</dbReference>
<dbReference type="InterPro" id="IPR036218">
    <property type="entry name" value="HIVI-bd_sf"/>
</dbReference>
<dbReference type="InterPro" id="IPR021567">
    <property type="entry name" value="LEDGF_IBD"/>
</dbReference>
<dbReference type="InterPro" id="IPR000313">
    <property type="entry name" value="PWWP_dom"/>
</dbReference>
<dbReference type="InterPro" id="IPR035441">
    <property type="entry name" value="TFIIS/LEDGF_dom_sf"/>
</dbReference>
<dbReference type="PANTHER" id="PTHR12550">
    <property type="entry name" value="HEPATOMA-DERIVED GROWTH FACTOR-RELATED"/>
    <property type="match status" value="1"/>
</dbReference>
<dbReference type="PANTHER" id="PTHR12550:SF18">
    <property type="entry name" value="HEPATOMA-DERIVED GROWTH FACTOR-RELATED PROTEIN 2"/>
    <property type="match status" value="1"/>
</dbReference>
<dbReference type="Pfam" id="PF11467">
    <property type="entry name" value="LEDGF"/>
    <property type="match status" value="1"/>
</dbReference>
<dbReference type="Pfam" id="PF00855">
    <property type="entry name" value="PWWP"/>
    <property type="match status" value="1"/>
</dbReference>
<dbReference type="SMART" id="SM00293">
    <property type="entry name" value="PWWP"/>
    <property type="match status" value="1"/>
</dbReference>
<dbReference type="SUPFAM" id="SSF140576">
    <property type="entry name" value="HIV integrase-binding domain"/>
    <property type="match status" value="1"/>
</dbReference>
<dbReference type="SUPFAM" id="SSF63748">
    <property type="entry name" value="Tudor/PWWP/MBT"/>
    <property type="match status" value="1"/>
</dbReference>
<dbReference type="PROSITE" id="PS50812">
    <property type="entry name" value="PWWP"/>
    <property type="match status" value="1"/>
</dbReference>
<protein>
    <recommendedName>
        <fullName>Hepatoma-derived growth factor-related protein 2</fullName>
        <shortName>HRP-2</shortName>
    </recommendedName>
</protein>
<sequence>MPLNFKPGDLVFAKMKGYPHWPARIDDVKDGAVKPPPNKYPIFFYGTHETAFLAPKDLFPYEKCKDKYGKPNKRKGFNEGLWEIQNNPQASYSLPPASVSSSDSDVPEEKSTARSDGEEEQETGQAILPTAGVSSSDEEGSDKGGVKRKGRTTTPPSAKRTKHSSSEQEPDSASSSEEENSDSDQDFTPEKSTPRIQRRTTNLGKKNKIFAESDSKSDESEDEKKEEEQKKSPSSSSASSPSLSSSDSEAPVKKTPRGRRPAEKPAPKPRGRGRKAEPIPSSDSSDSDSSVDRISEWKKRDEERRRELEERRKKEQEEQLRRLREEEREEEERKKREKAEKGDKSDSDSDSSKSEVIAPPKPKKSSSSSDSEEDKKPVKEVKPVASEIKKGKKEKVRAISDDSDSDKKVKKTIKKTRPSESARKTNQKEKRGERPRGRPSKVEKEKKKPEVITARKVVKKEPTVEEKLQKLHSEIKFALKVDNPDIQKCLDALEELGGLQVTSQILQKNTDVVATLKKIRRYKANQSVMDKAAEVYSRIKARILGPKLESQQKTVQKVNTAEKDPEEEKQTGKVEEDMDASVNGDFLSQRIETAGDKEQDGEGQNLDNKTEMETKQNNHAEHNSNPTEETIECRLISSENQTS</sequence>
<organism>
    <name type="scientific">Xenopus tropicalis</name>
    <name type="common">Western clawed frog</name>
    <name type="synonym">Silurana tropicalis</name>
    <dbReference type="NCBI Taxonomy" id="8364"/>
    <lineage>
        <taxon>Eukaryota</taxon>
        <taxon>Metazoa</taxon>
        <taxon>Chordata</taxon>
        <taxon>Craniata</taxon>
        <taxon>Vertebrata</taxon>
        <taxon>Euteleostomi</taxon>
        <taxon>Amphibia</taxon>
        <taxon>Batrachia</taxon>
        <taxon>Anura</taxon>
        <taxon>Pipoidea</taxon>
        <taxon>Pipidae</taxon>
        <taxon>Xenopodinae</taxon>
        <taxon>Xenopus</taxon>
        <taxon>Silurana</taxon>
    </lineage>
</organism>
<accession>Q6P4K1</accession>
<feature type="chain" id="PRO_0000317648" description="Hepatoma-derived growth factor-related protein 2">
    <location>
        <begin position="1"/>
        <end position="643"/>
    </location>
</feature>
<feature type="domain" description="PWWP" evidence="5">
    <location>
        <begin position="7"/>
        <end position="64"/>
    </location>
</feature>
<feature type="region of interest" description="Disordered" evidence="6">
    <location>
        <begin position="88"/>
        <end position="450"/>
    </location>
</feature>
<feature type="region of interest" description="Disordered" evidence="6">
    <location>
        <begin position="548"/>
        <end position="643"/>
    </location>
</feature>
<feature type="coiled-coil region" evidence="4">
    <location>
        <begin position="295"/>
        <end position="345"/>
    </location>
</feature>
<feature type="compositionally biased region" description="Low complexity" evidence="6">
    <location>
        <begin position="90"/>
        <end position="104"/>
    </location>
</feature>
<feature type="compositionally biased region" description="Basic and acidic residues" evidence="6">
    <location>
        <begin position="107"/>
        <end position="116"/>
    </location>
</feature>
<feature type="compositionally biased region" description="Acidic residues" evidence="6">
    <location>
        <begin position="176"/>
        <end position="187"/>
    </location>
</feature>
<feature type="compositionally biased region" description="Polar residues" evidence="6">
    <location>
        <begin position="194"/>
        <end position="204"/>
    </location>
</feature>
<feature type="compositionally biased region" description="Basic and acidic residues" evidence="6">
    <location>
        <begin position="209"/>
        <end position="231"/>
    </location>
</feature>
<feature type="compositionally biased region" description="Low complexity" evidence="6">
    <location>
        <begin position="232"/>
        <end position="249"/>
    </location>
</feature>
<feature type="compositionally biased region" description="Basic and acidic residues" evidence="6">
    <location>
        <begin position="290"/>
        <end position="353"/>
    </location>
</feature>
<feature type="compositionally biased region" description="Basic and acidic residues" evidence="6">
    <location>
        <begin position="373"/>
        <end position="382"/>
    </location>
</feature>
<feature type="compositionally biased region" description="Basic and acidic residues" evidence="6">
    <location>
        <begin position="417"/>
        <end position="450"/>
    </location>
</feature>
<feature type="compositionally biased region" description="Polar residues" evidence="6">
    <location>
        <begin position="549"/>
        <end position="559"/>
    </location>
</feature>
<feature type="compositionally biased region" description="Basic and acidic residues" evidence="6">
    <location>
        <begin position="560"/>
        <end position="575"/>
    </location>
</feature>
<feature type="compositionally biased region" description="Basic and acidic residues" evidence="6">
    <location>
        <begin position="608"/>
        <end position="622"/>
    </location>
</feature>